<evidence type="ECO:0000255" key="1">
    <source>
        <dbReference type="HAMAP-Rule" id="MF_01416"/>
    </source>
</evidence>
<evidence type="ECO:0000305" key="2"/>
<accession>Q2K3G7</accession>
<sequence length="188" mass="20015">MPVADTSQLTSGVAERYASSLFELALEQGAVDSVTADLDRFQAMLDESAELKRFVASPVFSAEDQLKAIIAISERAGISGFFANFLKVVARNRRLFALPGMIKAFRVIAANHRGEISAEVTSAHALTAEQENELKAALKGVTGKDVAIAVTVDPSILGGLIVKVGSRQIDTSLRTKLSTLKLALKEVG</sequence>
<comment type="function">
    <text evidence="1">F(1)F(0) ATP synthase produces ATP from ADP in the presence of a proton or sodium gradient. F-type ATPases consist of two structural domains, F(1) containing the extramembraneous catalytic core and F(0) containing the membrane proton channel, linked together by a central stalk and a peripheral stalk. During catalysis, ATP synthesis in the catalytic domain of F(1) is coupled via a rotary mechanism of the central stalk subunits to proton translocation.</text>
</comment>
<comment type="function">
    <text evidence="1">This protein is part of the stalk that links CF(0) to CF(1). It either transmits conformational changes from CF(0) to CF(1) or is implicated in proton conduction.</text>
</comment>
<comment type="subunit">
    <text evidence="1">F-type ATPases have 2 components, F(1) - the catalytic core - and F(0) - the membrane proton channel. F(1) has five subunits: alpha(3), beta(3), gamma(1), delta(1), epsilon(1). F(0) has three main subunits: a(1), b(2) and c(10-14). The alpha and beta chains form an alternating ring which encloses part of the gamma chain. F(1) is attached to F(0) by a central stalk formed by the gamma and epsilon chains, while a peripheral stalk is formed by the delta and b chains.</text>
</comment>
<comment type="subcellular location">
    <subcellularLocation>
        <location evidence="1">Cell inner membrane</location>
        <topology evidence="1">Peripheral membrane protein</topology>
    </subcellularLocation>
</comment>
<comment type="similarity">
    <text evidence="1">Belongs to the ATPase delta chain family.</text>
</comment>
<comment type="sequence caution" evidence="2">
    <conflict type="erroneous initiation">
        <sequence resource="EMBL-CDS" id="ABC92619"/>
    </conflict>
</comment>
<keyword id="KW-0066">ATP synthesis</keyword>
<keyword id="KW-0997">Cell inner membrane</keyword>
<keyword id="KW-1003">Cell membrane</keyword>
<keyword id="KW-0139">CF(1)</keyword>
<keyword id="KW-0375">Hydrogen ion transport</keyword>
<keyword id="KW-0406">Ion transport</keyword>
<keyword id="KW-0472">Membrane</keyword>
<keyword id="KW-1185">Reference proteome</keyword>
<keyword id="KW-0813">Transport</keyword>
<dbReference type="EMBL" id="CP000133">
    <property type="protein sequence ID" value="ABC92619.1"/>
    <property type="status" value="ALT_INIT"/>
    <property type="molecule type" value="Genomic_DNA"/>
</dbReference>
<dbReference type="RefSeq" id="WP_011427068.1">
    <property type="nucleotide sequence ID" value="NC_007761.1"/>
</dbReference>
<dbReference type="SMR" id="Q2K3G7"/>
<dbReference type="KEGG" id="ret:RHE_CH03873"/>
<dbReference type="eggNOG" id="COG0712">
    <property type="taxonomic scope" value="Bacteria"/>
</dbReference>
<dbReference type="HOGENOM" id="CLU_085114_0_1_5"/>
<dbReference type="OrthoDB" id="9796185at2"/>
<dbReference type="Proteomes" id="UP000001936">
    <property type="component" value="Chromosome"/>
</dbReference>
<dbReference type="GO" id="GO:0005886">
    <property type="term" value="C:plasma membrane"/>
    <property type="evidence" value="ECO:0007669"/>
    <property type="project" value="UniProtKB-SubCell"/>
</dbReference>
<dbReference type="GO" id="GO:0045259">
    <property type="term" value="C:proton-transporting ATP synthase complex"/>
    <property type="evidence" value="ECO:0007669"/>
    <property type="project" value="UniProtKB-KW"/>
</dbReference>
<dbReference type="GO" id="GO:0046933">
    <property type="term" value="F:proton-transporting ATP synthase activity, rotational mechanism"/>
    <property type="evidence" value="ECO:0007669"/>
    <property type="project" value="UniProtKB-UniRule"/>
</dbReference>
<dbReference type="Gene3D" id="1.10.520.20">
    <property type="entry name" value="N-terminal domain of the delta subunit of the F1F0-ATP synthase"/>
    <property type="match status" value="1"/>
</dbReference>
<dbReference type="HAMAP" id="MF_01416">
    <property type="entry name" value="ATP_synth_delta_bact"/>
    <property type="match status" value="1"/>
</dbReference>
<dbReference type="InterPro" id="IPR026015">
    <property type="entry name" value="ATP_synth_OSCP/delta_N_sf"/>
</dbReference>
<dbReference type="InterPro" id="IPR020781">
    <property type="entry name" value="ATPase_OSCP/d_CS"/>
</dbReference>
<dbReference type="InterPro" id="IPR000711">
    <property type="entry name" value="ATPase_OSCP/dsu"/>
</dbReference>
<dbReference type="NCBIfam" id="TIGR01145">
    <property type="entry name" value="ATP_synt_delta"/>
    <property type="match status" value="1"/>
</dbReference>
<dbReference type="NCBIfam" id="NF004402">
    <property type="entry name" value="PRK05758.2-2"/>
    <property type="match status" value="1"/>
</dbReference>
<dbReference type="NCBIfam" id="NF004406">
    <property type="entry name" value="PRK05758.3-2"/>
    <property type="match status" value="1"/>
</dbReference>
<dbReference type="PANTHER" id="PTHR11910">
    <property type="entry name" value="ATP SYNTHASE DELTA CHAIN"/>
    <property type="match status" value="1"/>
</dbReference>
<dbReference type="Pfam" id="PF00213">
    <property type="entry name" value="OSCP"/>
    <property type="match status" value="1"/>
</dbReference>
<dbReference type="PRINTS" id="PR00125">
    <property type="entry name" value="ATPASEDELTA"/>
</dbReference>
<dbReference type="SUPFAM" id="SSF47928">
    <property type="entry name" value="N-terminal domain of the delta subunit of the F1F0-ATP synthase"/>
    <property type="match status" value="1"/>
</dbReference>
<dbReference type="PROSITE" id="PS00389">
    <property type="entry name" value="ATPASE_DELTA"/>
    <property type="match status" value="1"/>
</dbReference>
<organism>
    <name type="scientific">Rhizobium etli (strain ATCC 51251 / DSM 11541 / JCM 21823 / NBRC 15573 / CFN 42)</name>
    <dbReference type="NCBI Taxonomy" id="347834"/>
    <lineage>
        <taxon>Bacteria</taxon>
        <taxon>Pseudomonadati</taxon>
        <taxon>Pseudomonadota</taxon>
        <taxon>Alphaproteobacteria</taxon>
        <taxon>Hyphomicrobiales</taxon>
        <taxon>Rhizobiaceae</taxon>
        <taxon>Rhizobium/Agrobacterium group</taxon>
        <taxon>Rhizobium</taxon>
    </lineage>
</organism>
<protein>
    <recommendedName>
        <fullName evidence="1">ATP synthase subunit delta</fullName>
    </recommendedName>
    <alternativeName>
        <fullName evidence="1">ATP synthase F(1) sector subunit delta</fullName>
    </alternativeName>
    <alternativeName>
        <fullName evidence="1">F-type ATPase subunit delta</fullName>
        <shortName evidence="1">F-ATPase subunit delta</shortName>
    </alternativeName>
</protein>
<name>ATPD_RHIEC</name>
<reference key="1">
    <citation type="journal article" date="2006" name="Proc. Natl. Acad. Sci. U.S.A.">
        <title>The partitioned Rhizobium etli genome: genetic and metabolic redundancy in seven interacting replicons.</title>
        <authorList>
            <person name="Gonzalez V."/>
            <person name="Santamaria R.I."/>
            <person name="Bustos P."/>
            <person name="Hernandez-Gonzalez I."/>
            <person name="Medrano-Soto A."/>
            <person name="Moreno-Hagelsieb G."/>
            <person name="Janga S.C."/>
            <person name="Ramirez M.A."/>
            <person name="Jimenez-Jacinto V."/>
            <person name="Collado-Vides J."/>
            <person name="Davila G."/>
        </authorList>
    </citation>
    <scope>NUCLEOTIDE SEQUENCE [LARGE SCALE GENOMIC DNA]</scope>
    <source>
        <strain>ATCC 51251 / DSM 11541 / JCM 21823 / NBRC 15573 / CFN 42</strain>
    </source>
</reference>
<gene>
    <name evidence="1" type="primary">atpH</name>
    <name type="ordered locus">RHE_CH03873</name>
</gene>
<proteinExistence type="inferred from homology"/>
<feature type="chain" id="PRO_0000371089" description="ATP synthase subunit delta">
    <location>
        <begin position="1"/>
        <end position="188"/>
    </location>
</feature>